<keyword id="KW-0963">Cytoplasm</keyword>
<keyword id="KW-0225">Disease variant</keyword>
<keyword id="KW-0880">Kelch repeat</keyword>
<keyword id="KW-1057">Nemaline myopathy</keyword>
<keyword id="KW-1267">Proteomics identification</keyword>
<keyword id="KW-1185">Reference proteome</keyword>
<keyword id="KW-0677">Repeat</keyword>
<keyword id="KW-0832">Ubl conjugation</keyword>
<keyword id="KW-0833">Ubl conjugation pathway</keyword>
<evidence type="ECO:0000255" key="1">
    <source>
        <dbReference type="PROSITE-ProRule" id="PRU00037"/>
    </source>
</evidence>
<evidence type="ECO:0000269" key="2">
    <source>
    </source>
</evidence>
<evidence type="ECO:0000269" key="3">
    <source>
    </source>
</evidence>
<accession>C9JR72</accession>
<dbReference type="EMBL" id="AC013553">
    <property type="status" value="NOT_ANNOTATED_CDS"/>
    <property type="molecule type" value="Genomic_DNA"/>
</dbReference>
<dbReference type="EMBL" id="CH471082">
    <property type="protein sequence ID" value="EAW77711.1"/>
    <property type="molecule type" value="Genomic_DNA"/>
</dbReference>
<dbReference type="CCDS" id="CCDS45281.1"/>
<dbReference type="RefSeq" id="NP_001094832.1">
    <property type="nucleotide sequence ID" value="NM_001101362.3"/>
</dbReference>
<dbReference type="SMR" id="C9JR72"/>
<dbReference type="BioGRID" id="133620">
    <property type="interactions" value="2"/>
</dbReference>
<dbReference type="ComplexPortal" id="CPX-9081">
    <property type="entry name" value="CRL3 E3 ubiquitin ligase complex, KBTBD13 variant"/>
</dbReference>
<dbReference type="FunCoup" id="C9JR72">
    <property type="interactions" value="91"/>
</dbReference>
<dbReference type="IntAct" id="C9JR72">
    <property type="interactions" value="1"/>
</dbReference>
<dbReference type="STRING" id="9606.ENSP00000388723"/>
<dbReference type="iPTMnet" id="C9JR72"/>
<dbReference type="PhosphoSitePlus" id="C9JR72"/>
<dbReference type="BioMuta" id="KBTBD13"/>
<dbReference type="MassIVE" id="C9JR72"/>
<dbReference type="PaxDb" id="9606-ENSP00000388723"/>
<dbReference type="PeptideAtlas" id="C9JR72"/>
<dbReference type="Antibodypedia" id="56472">
    <property type="antibodies" value="51 antibodies from 13 providers"/>
</dbReference>
<dbReference type="DNASU" id="390594"/>
<dbReference type="Ensembl" id="ENST00000432196.5">
    <property type="protein sequence ID" value="ENSP00000388723.2"/>
    <property type="gene ID" value="ENSG00000234438.5"/>
</dbReference>
<dbReference type="GeneID" id="390594"/>
<dbReference type="KEGG" id="hsa:390594"/>
<dbReference type="MANE-Select" id="ENST00000432196.5">
    <property type="protein sequence ID" value="ENSP00000388723.2"/>
    <property type="RefSeq nucleotide sequence ID" value="NM_001101362.3"/>
    <property type="RefSeq protein sequence ID" value="NP_001094832.1"/>
</dbReference>
<dbReference type="UCSC" id="uc010uis.3">
    <property type="organism name" value="human"/>
</dbReference>
<dbReference type="AGR" id="HGNC:37227"/>
<dbReference type="CTD" id="390594"/>
<dbReference type="DisGeNET" id="390594"/>
<dbReference type="GeneCards" id="KBTBD13"/>
<dbReference type="HGNC" id="HGNC:37227">
    <property type="gene designation" value="KBTBD13"/>
</dbReference>
<dbReference type="HPA" id="ENSG00000234438">
    <property type="expression patterns" value="Tissue enriched (skeletal)"/>
</dbReference>
<dbReference type="MalaCards" id="KBTBD13"/>
<dbReference type="MIM" id="609273">
    <property type="type" value="phenotype"/>
</dbReference>
<dbReference type="MIM" id="613727">
    <property type="type" value="gene"/>
</dbReference>
<dbReference type="neXtProt" id="NX_C9JR72"/>
<dbReference type="OpenTargets" id="ENSG00000234438"/>
<dbReference type="Orphanet" id="171439">
    <property type="disease" value="Childhood-onset nemaline myopathy"/>
</dbReference>
<dbReference type="PharmGKB" id="PA165479144"/>
<dbReference type="VEuPathDB" id="HostDB:ENSG00000234438"/>
<dbReference type="eggNOG" id="KOG1072">
    <property type="taxonomic scope" value="Eukaryota"/>
</dbReference>
<dbReference type="GeneTree" id="ENSGT00940000161629"/>
<dbReference type="HOGENOM" id="CLU_049036_0_0_1"/>
<dbReference type="InParanoid" id="C9JR72"/>
<dbReference type="OMA" id="WSEFPSP"/>
<dbReference type="OrthoDB" id="45365at2759"/>
<dbReference type="PAN-GO" id="C9JR72">
    <property type="GO annotations" value="2 GO annotations based on evolutionary models"/>
</dbReference>
<dbReference type="PhylomeDB" id="C9JR72"/>
<dbReference type="TreeFam" id="TF328485"/>
<dbReference type="PathwayCommons" id="C9JR72"/>
<dbReference type="Reactome" id="R-HSA-8951664">
    <property type="pathway name" value="Neddylation"/>
</dbReference>
<dbReference type="Reactome" id="R-HSA-983168">
    <property type="pathway name" value="Antigen processing: Ubiquitination &amp; Proteasome degradation"/>
</dbReference>
<dbReference type="SignaLink" id="C9JR72"/>
<dbReference type="UniPathway" id="UPA00143"/>
<dbReference type="BioGRID-ORCS" id="390594">
    <property type="hits" value="6 hits in 1181 CRISPR screens"/>
</dbReference>
<dbReference type="GenomeRNAi" id="390594"/>
<dbReference type="Pharos" id="C9JR72">
    <property type="development level" value="Tbio"/>
</dbReference>
<dbReference type="PRO" id="PR:C9JR72"/>
<dbReference type="Proteomes" id="UP000005640">
    <property type="component" value="Chromosome 15"/>
</dbReference>
<dbReference type="RNAct" id="C9JR72">
    <property type="molecule type" value="protein"/>
</dbReference>
<dbReference type="Bgee" id="ENSG00000234438">
    <property type="expression patterns" value="Expressed in primordial germ cell in gonad and 40 other cell types or tissues"/>
</dbReference>
<dbReference type="GO" id="GO:0005829">
    <property type="term" value="C:cytosol"/>
    <property type="evidence" value="ECO:0000304"/>
    <property type="project" value="Reactome"/>
</dbReference>
<dbReference type="GO" id="GO:0051015">
    <property type="term" value="F:actin filament binding"/>
    <property type="evidence" value="ECO:0007669"/>
    <property type="project" value="Ensembl"/>
</dbReference>
<dbReference type="GO" id="GO:0007015">
    <property type="term" value="P:actin filament organization"/>
    <property type="evidence" value="ECO:0007669"/>
    <property type="project" value="Ensembl"/>
</dbReference>
<dbReference type="GO" id="GO:0016567">
    <property type="term" value="P:protein ubiquitination"/>
    <property type="evidence" value="ECO:0007669"/>
    <property type="project" value="UniProtKB-UniPathway"/>
</dbReference>
<dbReference type="GO" id="GO:0014728">
    <property type="term" value="P:regulation of the force of skeletal muscle contraction"/>
    <property type="evidence" value="ECO:0000315"/>
    <property type="project" value="MGI"/>
</dbReference>
<dbReference type="GO" id="GO:0090076">
    <property type="term" value="P:relaxation of skeletal muscle"/>
    <property type="evidence" value="ECO:0000315"/>
    <property type="project" value="MGI"/>
</dbReference>
<dbReference type="CDD" id="cd18486">
    <property type="entry name" value="BACK_KBTBD13"/>
    <property type="match status" value="1"/>
</dbReference>
<dbReference type="CDD" id="cd18320">
    <property type="entry name" value="BTB_POZ_KBTBD13"/>
    <property type="match status" value="1"/>
</dbReference>
<dbReference type="FunFam" id="3.30.710.10:FF:000180">
    <property type="entry name" value="Kelch repeat and BTB domain containing 13"/>
    <property type="match status" value="1"/>
</dbReference>
<dbReference type="FunFam" id="2.120.10.80:FF:000179">
    <property type="entry name" value="kelch repeat and BTB domain-containing protein 13"/>
    <property type="match status" value="1"/>
</dbReference>
<dbReference type="Gene3D" id="2.120.10.80">
    <property type="entry name" value="Kelch-type beta propeller"/>
    <property type="match status" value="1"/>
</dbReference>
<dbReference type="Gene3D" id="3.30.710.10">
    <property type="entry name" value="Potassium Channel Kv1.1, Chain A"/>
    <property type="match status" value="1"/>
</dbReference>
<dbReference type="InterPro" id="IPR000210">
    <property type="entry name" value="BTB/POZ_dom"/>
</dbReference>
<dbReference type="InterPro" id="IPR052392">
    <property type="entry name" value="Kelch-BTB_domain-containing"/>
</dbReference>
<dbReference type="InterPro" id="IPR015915">
    <property type="entry name" value="Kelch-typ_b-propeller"/>
</dbReference>
<dbReference type="InterPro" id="IPR006652">
    <property type="entry name" value="Kelch_1"/>
</dbReference>
<dbReference type="InterPro" id="IPR011333">
    <property type="entry name" value="SKP1/BTB/POZ_sf"/>
</dbReference>
<dbReference type="PANTHER" id="PTHR46375:SF3">
    <property type="entry name" value="KELCH REPEAT AND BTB DOMAIN-CONTAINING PROTEIN 13"/>
    <property type="match status" value="1"/>
</dbReference>
<dbReference type="PANTHER" id="PTHR46375">
    <property type="entry name" value="KELCH REPEAT AND BTB DOMAIN-CONTAINING PROTEIN 13-RELATED"/>
    <property type="match status" value="1"/>
</dbReference>
<dbReference type="Pfam" id="PF00651">
    <property type="entry name" value="BTB"/>
    <property type="match status" value="1"/>
</dbReference>
<dbReference type="Pfam" id="PF01344">
    <property type="entry name" value="Kelch_1"/>
    <property type="match status" value="2"/>
</dbReference>
<dbReference type="SMART" id="SM00612">
    <property type="entry name" value="Kelch"/>
    <property type="match status" value="2"/>
</dbReference>
<dbReference type="SUPFAM" id="SSF117281">
    <property type="entry name" value="Kelch motif"/>
    <property type="match status" value="1"/>
</dbReference>
<dbReference type="SUPFAM" id="SSF54695">
    <property type="entry name" value="POZ domain"/>
    <property type="match status" value="1"/>
</dbReference>
<dbReference type="PROSITE" id="PS50097">
    <property type="entry name" value="BTB"/>
    <property type="match status" value="1"/>
</dbReference>
<feature type="chain" id="PRO_0000393906" description="Kelch repeat and BTB domain-containing protein 13">
    <location>
        <begin position="1"/>
        <end position="458"/>
    </location>
</feature>
<feature type="domain" description="BTB" evidence="1">
    <location>
        <begin position="7"/>
        <end position="74"/>
    </location>
</feature>
<feature type="repeat" description="Kelch 1">
    <location>
        <begin position="159"/>
        <end position="209"/>
    </location>
</feature>
<feature type="repeat" description="Kelch 2">
    <location>
        <begin position="210"/>
        <end position="258"/>
    </location>
</feature>
<feature type="repeat" description="Kelch 3">
    <location>
        <begin position="259"/>
        <end position="305"/>
    </location>
</feature>
<feature type="repeat" description="Kelch 4">
    <location>
        <begin position="307"/>
        <end position="350"/>
    </location>
</feature>
<feature type="repeat" description="Kelch 5">
    <location>
        <begin position="352"/>
        <end position="400"/>
    </location>
</feature>
<feature type="sequence variant" id="VAR_064889" description="In NEM6; dbSNP:rs200549195." evidence="2">
    <original>R</original>
    <variation>S</variation>
    <location>
        <position position="248"/>
    </location>
</feature>
<feature type="sequence variant" id="VAR_064890" description="In NEM6; dbSNP:rs1364598710." evidence="2">
    <original>K</original>
    <variation>N</variation>
    <location>
        <position position="390"/>
    </location>
</feature>
<feature type="sequence variant" id="VAR_064891" description="In NEM6; dbSNP:rs387907090." evidence="2">
    <original>R</original>
    <variation>C</variation>
    <location>
        <position position="408"/>
    </location>
</feature>
<protein>
    <recommendedName>
        <fullName>Kelch repeat and BTB domain-containing protein 13</fullName>
    </recommendedName>
</protein>
<gene>
    <name type="primary">KBTBD13</name>
</gene>
<name>KBTBD_HUMAN</name>
<comment type="function">
    <text evidence="3">Substrate-specific adapter of a BCR (BTB-CUL3-RBX1) E3 ubiquitin ligase complex.</text>
</comment>
<comment type="pathway">
    <text>Protein modification; protein ubiquitination.</text>
</comment>
<comment type="subunit">
    <text evidence="3">Component of the BCR(KBTBD13) E3 ubiquitin ligase complex, at least composed of CUL3 and KBTBD13 and RBX1. Interacts with CUL3.</text>
</comment>
<comment type="subcellular location">
    <subcellularLocation>
        <location evidence="2 3">Cytoplasm</location>
    </subcellularLocation>
</comment>
<comment type="tissue specificity">
    <text evidence="2">Expressed in skeletal muscle.</text>
</comment>
<comment type="domain">
    <text>The BCB domain mediates the interaction with CUL3.</text>
</comment>
<comment type="PTM">
    <text evidence="3">Autoubiquitinated.</text>
</comment>
<comment type="disease" evidence="2">
    <disease id="DI-02960">
        <name>Nemaline myopathy 6</name>
        <acronym>NEM6</acronym>
        <description>A form of nemaline myopathy characterized by childhood onset of slowly progressive proximal muscle weakness, exercise intolerance, and slow movements with stiff muscles. Patients are unable to run or correct themselves from falling over.</description>
        <dbReference type="MIM" id="609273"/>
    </disease>
    <text>The disease is caused by variants affecting the gene represented in this entry.</text>
</comment>
<reference key="1">
    <citation type="journal article" date="2006" name="Nature">
        <title>Analysis of the DNA sequence and duplication history of human chromosome 15.</title>
        <authorList>
            <person name="Zody M.C."/>
            <person name="Garber M."/>
            <person name="Sharpe T."/>
            <person name="Young S.K."/>
            <person name="Rowen L."/>
            <person name="O'Neill K."/>
            <person name="Whittaker C.A."/>
            <person name="Kamal M."/>
            <person name="Chang J.L."/>
            <person name="Cuomo C.A."/>
            <person name="Dewar K."/>
            <person name="FitzGerald M.G."/>
            <person name="Kodira C.D."/>
            <person name="Madan A."/>
            <person name="Qin S."/>
            <person name="Yang X."/>
            <person name="Abbasi N."/>
            <person name="Abouelleil A."/>
            <person name="Arachchi H.M."/>
            <person name="Baradarani L."/>
            <person name="Birditt B."/>
            <person name="Bloom S."/>
            <person name="Bloom T."/>
            <person name="Borowsky M.L."/>
            <person name="Burke J."/>
            <person name="Butler J."/>
            <person name="Cook A."/>
            <person name="DeArellano K."/>
            <person name="DeCaprio D."/>
            <person name="Dorris L. III"/>
            <person name="Dors M."/>
            <person name="Eichler E.E."/>
            <person name="Engels R."/>
            <person name="Fahey J."/>
            <person name="Fleetwood P."/>
            <person name="Friedman C."/>
            <person name="Gearin G."/>
            <person name="Hall J.L."/>
            <person name="Hensley G."/>
            <person name="Johnson E."/>
            <person name="Jones C."/>
            <person name="Kamat A."/>
            <person name="Kaur A."/>
            <person name="Locke D.P."/>
            <person name="Madan A."/>
            <person name="Munson G."/>
            <person name="Jaffe D.B."/>
            <person name="Lui A."/>
            <person name="Macdonald P."/>
            <person name="Mauceli E."/>
            <person name="Naylor J.W."/>
            <person name="Nesbitt R."/>
            <person name="Nicol R."/>
            <person name="O'Leary S.B."/>
            <person name="Ratcliffe A."/>
            <person name="Rounsley S."/>
            <person name="She X."/>
            <person name="Sneddon K.M.B."/>
            <person name="Stewart S."/>
            <person name="Sougnez C."/>
            <person name="Stone S.M."/>
            <person name="Topham K."/>
            <person name="Vincent D."/>
            <person name="Wang S."/>
            <person name="Zimmer A.R."/>
            <person name="Birren B.W."/>
            <person name="Hood L."/>
            <person name="Lander E.S."/>
            <person name="Nusbaum C."/>
        </authorList>
    </citation>
    <scope>NUCLEOTIDE SEQUENCE [LARGE SCALE GENOMIC DNA]</scope>
</reference>
<reference key="2">
    <citation type="submission" date="2005-07" db="EMBL/GenBank/DDBJ databases">
        <authorList>
            <person name="Mural R.J."/>
            <person name="Istrail S."/>
            <person name="Sutton G.G."/>
            <person name="Florea L."/>
            <person name="Halpern A.L."/>
            <person name="Mobarry C.M."/>
            <person name="Lippert R."/>
            <person name="Walenz B."/>
            <person name="Shatkay H."/>
            <person name="Dew I."/>
            <person name="Miller J.R."/>
            <person name="Flanigan M.J."/>
            <person name="Edwards N.J."/>
            <person name="Bolanos R."/>
            <person name="Fasulo D."/>
            <person name="Halldorsson B.V."/>
            <person name="Hannenhalli S."/>
            <person name="Turner R."/>
            <person name="Yooseph S."/>
            <person name="Lu F."/>
            <person name="Nusskern D.R."/>
            <person name="Shue B.C."/>
            <person name="Zheng X.H."/>
            <person name="Zhong F."/>
            <person name="Delcher A.L."/>
            <person name="Huson D.H."/>
            <person name="Kravitz S.A."/>
            <person name="Mouchard L."/>
            <person name="Reinert K."/>
            <person name="Remington K.A."/>
            <person name="Clark A.G."/>
            <person name="Waterman M.S."/>
            <person name="Eichler E.E."/>
            <person name="Adams M.D."/>
            <person name="Hunkapiller M.W."/>
            <person name="Myers E.W."/>
            <person name="Venter J.C."/>
        </authorList>
    </citation>
    <scope>NUCLEOTIDE SEQUENCE [LARGE SCALE GENOMIC DNA]</scope>
</reference>
<reference key="3">
    <citation type="journal article" date="2012" name="Biochem. Biophys. Res. Commun.">
        <title>KBTBD13 interacts with Cullin 3 to form a functional ubiquitin ligase.</title>
        <authorList>
            <person name="Sambuughin N."/>
            <person name="Swietnicki W."/>
            <person name="Techtmann S."/>
            <person name="Matrosova V."/>
            <person name="Wallace T."/>
            <person name="Goldfarb L."/>
            <person name="Maynard E."/>
        </authorList>
    </citation>
    <scope>FUNCTION</scope>
    <scope>AUTOUBIQUITINATION</scope>
    <scope>INTERACTION WITH CUL3</scope>
    <scope>SUBCELLULAR LOCATION</scope>
</reference>
<reference key="4">
    <citation type="journal article" date="2010" name="Am. J. Hum. Genet.">
        <title>Dominant mutations in KBTBD13, a member of the BTB/Kelch family, cause nemaline myopathy with cores.</title>
        <authorList>
            <person name="Sambuughin N."/>
            <person name="Yau K.S."/>
            <person name="Olive M."/>
            <person name="Duff R.M."/>
            <person name="Bayarsaikhan M."/>
            <person name="Lu S."/>
            <person name="Gonzalez-Mera L."/>
            <person name="Sivadorai P."/>
            <person name="Nowak K.J."/>
            <person name="Ravenscroft G."/>
            <person name="Mastaglia F.L."/>
            <person name="North K.N."/>
            <person name="Ilkovski B."/>
            <person name="Kremer H."/>
            <person name="Lammens M."/>
            <person name="van Engelen B.G."/>
            <person name="Fabian V."/>
            <person name="Lamont P."/>
            <person name="Davis M.R."/>
            <person name="Laing N.G."/>
            <person name="Goldfarb L.G."/>
        </authorList>
    </citation>
    <scope>VARIANTS NEM6 SER-248; ASN-390 AND CYS-408</scope>
    <scope>SUBCELLULAR LOCATION</scope>
    <scope>TISSUE SPECIFICITY</scope>
</reference>
<organism>
    <name type="scientific">Homo sapiens</name>
    <name type="common">Human</name>
    <dbReference type="NCBI Taxonomy" id="9606"/>
    <lineage>
        <taxon>Eukaryota</taxon>
        <taxon>Metazoa</taxon>
        <taxon>Chordata</taxon>
        <taxon>Craniata</taxon>
        <taxon>Vertebrata</taxon>
        <taxon>Euteleostomi</taxon>
        <taxon>Mammalia</taxon>
        <taxon>Eutheria</taxon>
        <taxon>Euarchontoglires</taxon>
        <taxon>Primates</taxon>
        <taxon>Haplorrhini</taxon>
        <taxon>Catarrhini</taxon>
        <taxon>Hominidae</taxon>
        <taxon>Homo</taxon>
    </lineage>
</organism>
<sequence length="458" mass="49485">MARGPQTLVQVWVGGQLFQADRALLVEHCGFFRGLFRSGMRETRAAEVRLGVLSAGGFRATLQVLRGDRPALAAEDELLQAVECAAFLQAPALARFLEHNLTSDNCALLCDAAAAFGLRDVFHSAALFICDGERELAAELALPEARAYVAALRPSSYAAVSTHTPAPGFLEDASRTLCYLDEEEDAWRTLAALPLEASTLLAGVATLGNKLYIVGGVRGASKEVVELGFCYDPDGGTWHEFPSPHQPRYDTALAGFDGRLYAIGGEFQRTPISSVERYDPAAGCWSFVADLPQPAAGVPCAQACGRLFVCLWRPADTTAVVEYAVRTDAWLPVAELRRPQSYGHCMVAHRDSLYVVRNGPSDDFLHCAIDCLNLATGQWTALPGQFVNSKGALFTAVVRGDTVYTVNRMFTLLYAIEGGTWRLLREKAGFPRPGSLQTFLLRLPPGAPGPVTSTTAEL</sequence>
<proteinExistence type="evidence at protein level"/>